<comment type="function">
    <text evidence="1">Binds directly to 16S ribosomal RNA.</text>
</comment>
<comment type="similarity">
    <text evidence="1">Belongs to the bacterial ribosomal protein bS20 family.</text>
</comment>
<reference key="1">
    <citation type="journal article" date="2009" name="PLoS ONE">
        <title>Genome sequence of the pathogenic intestinal spirochete Brachyspira hyodysenteriae reveals adaptations to its lifestyle in the porcine large intestine.</title>
        <authorList>
            <person name="Bellgard M.I."/>
            <person name="Wanchanthuek P."/>
            <person name="La T."/>
            <person name="Ryan K."/>
            <person name="Moolhuijzen P."/>
            <person name="Albertyn Z."/>
            <person name="Shaban B."/>
            <person name="Motro Y."/>
            <person name="Dunn D.S."/>
            <person name="Schibeci D."/>
            <person name="Hunter A."/>
            <person name="Barrero R."/>
            <person name="Phillips N.D."/>
            <person name="Hampson D.J."/>
        </authorList>
    </citation>
    <scope>NUCLEOTIDE SEQUENCE [LARGE SCALE GENOMIC DNA]</scope>
    <source>
        <strain>ATCC 49526 / WA1</strain>
    </source>
</reference>
<proteinExistence type="inferred from homology"/>
<organism>
    <name type="scientific">Brachyspira hyodysenteriae (strain ATCC 49526 / WA1)</name>
    <dbReference type="NCBI Taxonomy" id="565034"/>
    <lineage>
        <taxon>Bacteria</taxon>
        <taxon>Pseudomonadati</taxon>
        <taxon>Spirochaetota</taxon>
        <taxon>Spirochaetia</taxon>
        <taxon>Brachyspirales</taxon>
        <taxon>Brachyspiraceae</taxon>
        <taxon>Brachyspira</taxon>
    </lineage>
</organism>
<sequence>MPNIASASKRLRQNEVRNLYNRKIKSFLNTQKKKVIKAVDSNDKNLASEEFKKYASALDKAARKSVIHANRAAAKKSDMMKKINAMN</sequence>
<feature type="chain" id="PRO_1000194226" description="Small ribosomal subunit protein bS20">
    <location>
        <begin position="1"/>
        <end position="87"/>
    </location>
</feature>
<keyword id="KW-0687">Ribonucleoprotein</keyword>
<keyword id="KW-0689">Ribosomal protein</keyword>
<keyword id="KW-0694">RNA-binding</keyword>
<keyword id="KW-0699">rRNA-binding</keyword>
<accession>C0QVH2</accession>
<dbReference type="EMBL" id="CP001357">
    <property type="protein sequence ID" value="ACN84473.1"/>
    <property type="molecule type" value="Genomic_DNA"/>
</dbReference>
<dbReference type="RefSeq" id="WP_012671512.1">
    <property type="nucleotide sequence ID" value="NC_012225.1"/>
</dbReference>
<dbReference type="SMR" id="C0QVH2"/>
<dbReference type="STRING" id="565034.BHWA1_02014"/>
<dbReference type="GeneID" id="63963166"/>
<dbReference type="KEGG" id="bhy:BHWA1_02014"/>
<dbReference type="eggNOG" id="COG0268">
    <property type="taxonomic scope" value="Bacteria"/>
</dbReference>
<dbReference type="HOGENOM" id="CLU_160655_4_0_12"/>
<dbReference type="Proteomes" id="UP000001803">
    <property type="component" value="Chromosome"/>
</dbReference>
<dbReference type="GO" id="GO:0005829">
    <property type="term" value="C:cytosol"/>
    <property type="evidence" value="ECO:0007669"/>
    <property type="project" value="TreeGrafter"/>
</dbReference>
<dbReference type="GO" id="GO:0015935">
    <property type="term" value="C:small ribosomal subunit"/>
    <property type="evidence" value="ECO:0007669"/>
    <property type="project" value="TreeGrafter"/>
</dbReference>
<dbReference type="GO" id="GO:0070181">
    <property type="term" value="F:small ribosomal subunit rRNA binding"/>
    <property type="evidence" value="ECO:0007669"/>
    <property type="project" value="TreeGrafter"/>
</dbReference>
<dbReference type="GO" id="GO:0003735">
    <property type="term" value="F:structural constituent of ribosome"/>
    <property type="evidence" value="ECO:0007669"/>
    <property type="project" value="InterPro"/>
</dbReference>
<dbReference type="GO" id="GO:0006412">
    <property type="term" value="P:translation"/>
    <property type="evidence" value="ECO:0007669"/>
    <property type="project" value="UniProtKB-UniRule"/>
</dbReference>
<dbReference type="Gene3D" id="1.20.58.110">
    <property type="entry name" value="Ribosomal protein S20"/>
    <property type="match status" value="1"/>
</dbReference>
<dbReference type="HAMAP" id="MF_00500">
    <property type="entry name" value="Ribosomal_bS20"/>
    <property type="match status" value="1"/>
</dbReference>
<dbReference type="InterPro" id="IPR002583">
    <property type="entry name" value="Ribosomal_bS20"/>
</dbReference>
<dbReference type="InterPro" id="IPR036510">
    <property type="entry name" value="Ribosomal_bS20_sf"/>
</dbReference>
<dbReference type="NCBIfam" id="TIGR00029">
    <property type="entry name" value="S20"/>
    <property type="match status" value="1"/>
</dbReference>
<dbReference type="PANTHER" id="PTHR33398">
    <property type="entry name" value="30S RIBOSOMAL PROTEIN S20"/>
    <property type="match status" value="1"/>
</dbReference>
<dbReference type="PANTHER" id="PTHR33398:SF1">
    <property type="entry name" value="SMALL RIBOSOMAL SUBUNIT PROTEIN BS20C"/>
    <property type="match status" value="1"/>
</dbReference>
<dbReference type="Pfam" id="PF01649">
    <property type="entry name" value="Ribosomal_S20p"/>
    <property type="match status" value="1"/>
</dbReference>
<dbReference type="SUPFAM" id="SSF46992">
    <property type="entry name" value="Ribosomal protein S20"/>
    <property type="match status" value="1"/>
</dbReference>
<gene>
    <name evidence="1" type="primary">rpsT</name>
    <name type="ordered locus">BHWA1_02014</name>
</gene>
<name>RS20_BRAHW</name>
<evidence type="ECO:0000255" key="1">
    <source>
        <dbReference type="HAMAP-Rule" id="MF_00500"/>
    </source>
</evidence>
<evidence type="ECO:0000305" key="2"/>
<protein>
    <recommendedName>
        <fullName evidence="1">Small ribosomal subunit protein bS20</fullName>
    </recommendedName>
    <alternativeName>
        <fullName evidence="2">30S ribosomal protein S20</fullName>
    </alternativeName>
</protein>